<accession>A6TSK3</accession>
<reference key="1">
    <citation type="journal article" date="2016" name="Genome Announc.">
        <title>Complete genome sequence of Alkaliphilus metalliredigens strain QYMF, an alkaliphilic and metal-reducing bacterium isolated from borax-contaminated leachate ponds.</title>
        <authorList>
            <person name="Hwang C."/>
            <person name="Copeland A."/>
            <person name="Lucas S."/>
            <person name="Lapidus A."/>
            <person name="Barry K."/>
            <person name="Detter J.C."/>
            <person name="Glavina Del Rio T."/>
            <person name="Hammon N."/>
            <person name="Israni S."/>
            <person name="Dalin E."/>
            <person name="Tice H."/>
            <person name="Pitluck S."/>
            <person name="Chertkov O."/>
            <person name="Brettin T."/>
            <person name="Bruce D."/>
            <person name="Han C."/>
            <person name="Schmutz J."/>
            <person name="Larimer F."/>
            <person name="Land M.L."/>
            <person name="Hauser L."/>
            <person name="Kyrpides N."/>
            <person name="Mikhailova N."/>
            <person name="Ye Q."/>
            <person name="Zhou J."/>
            <person name="Richardson P."/>
            <person name="Fields M.W."/>
        </authorList>
    </citation>
    <scope>NUCLEOTIDE SEQUENCE [LARGE SCALE GENOMIC DNA]</scope>
    <source>
        <strain>QYMF</strain>
    </source>
</reference>
<proteinExistence type="inferred from homology"/>
<keyword id="KW-0963">Cytoplasm</keyword>
<keyword id="KW-0255">Endonuclease</keyword>
<keyword id="KW-0378">Hydrolase</keyword>
<keyword id="KW-0479">Metal-binding</keyword>
<keyword id="KW-0540">Nuclease</keyword>
<keyword id="KW-1185">Reference proteome</keyword>
<keyword id="KW-0690">Ribosome biogenesis</keyword>
<keyword id="KW-0698">rRNA processing</keyword>
<keyword id="KW-0862">Zinc</keyword>
<name>YBEY_ALKMQ</name>
<protein>
    <recommendedName>
        <fullName evidence="1">Endoribonuclease YbeY</fullName>
        <ecNumber evidence="1">3.1.-.-</ecNumber>
    </recommendedName>
</protein>
<sequence length="155" mass="17991">MPVSLVIDNRQKQVEIEQKLIMLLEKAVITSLAYEGWDPDYEVSLSFVSNKEIQNLNRTYRGKDYATDVLSFPLVDDTDGFPMGEEKLLGDVVISVEKAVEQAKEYQHSFEREMGFLMVHSLFHLMGYDHLEETEAQEMRKREEIVLTEMGLVRE</sequence>
<organism>
    <name type="scientific">Alkaliphilus metalliredigens (strain QYMF)</name>
    <dbReference type="NCBI Taxonomy" id="293826"/>
    <lineage>
        <taxon>Bacteria</taxon>
        <taxon>Bacillati</taxon>
        <taxon>Bacillota</taxon>
        <taxon>Clostridia</taxon>
        <taxon>Peptostreptococcales</taxon>
        <taxon>Natronincolaceae</taxon>
        <taxon>Alkaliphilus</taxon>
    </lineage>
</organism>
<dbReference type="EC" id="3.1.-.-" evidence="1"/>
<dbReference type="EMBL" id="CP000724">
    <property type="protein sequence ID" value="ABR49171.1"/>
    <property type="molecule type" value="Genomic_DNA"/>
</dbReference>
<dbReference type="RefSeq" id="WP_012064138.1">
    <property type="nucleotide sequence ID" value="NC_009633.1"/>
</dbReference>
<dbReference type="SMR" id="A6TSK3"/>
<dbReference type="STRING" id="293826.Amet_3031"/>
<dbReference type="KEGG" id="amt:Amet_3031"/>
<dbReference type="eggNOG" id="COG0319">
    <property type="taxonomic scope" value="Bacteria"/>
</dbReference>
<dbReference type="HOGENOM" id="CLU_106710_3_0_9"/>
<dbReference type="OrthoDB" id="9807740at2"/>
<dbReference type="Proteomes" id="UP000001572">
    <property type="component" value="Chromosome"/>
</dbReference>
<dbReference type="GO" id="GO:0005737">
    <property type="term" value="C:cytoplasm"/>
    <property type="evidence" value="ECO:0007669"/>
    <property type="project" value="UniProtKB-SubCell"/>
</dbReference>
<dbReference type="GO" id="GO:0004222">
    <property type="term" value="F:metalloendopeptidase activity"/>
    <property type="evidence" value="ECO:0007669"/>
    <property type="project" value="InterPro"/>
</dbReference>
<dbReference type="GO" id="GO:0004521">
    <property type="term" value="F:RNA endonuclease activity"/>
    <property type="evidence" value="ECO:0007669"/>
    <property type="project" value="UniProtKB-UniRule"/>
</dbReference>
<dbReference type="GO" id="GO:0008270">
    <property type="term" value="F:zinc ion binding"/>
    <property type="evidence" value="ECO:0007669"/>
    <property type="project" value="UniProtKB-UniRule"/>
</dbReference>
<dbReference type="GO" id="GO:0006364">
    <property type="term" value="P:rRNA processing"/>
    <property type="evidence" value="ECO:0007669"/>
    <property type="project" value="UniProtKB-UniRule"/>
</dbReference>
<dbReference type="Gene3D" id="3.40.390.30">
    <property type="entry name" value="Metalloproteases ('zincins'), catalytic domain"/>
    <property type="match status" value="1"/>
</dbReference>
<dbReference type="HAMAP" id="MF_00009">
    <property type="entry name" value="Endoribonucl_YbeY"/>
    <property type="match status" value="1"/>
</dbReference>
<dbReference type="InterPro" id="IPR023091">
    <property type="entry name" value="MetalPrtase_cat_dom_sf_prd"/>
</dbReference>
<dbReference type="InterPro" id="IPR002036">
    <property type="entry name" value="YbeY"/>
</dbReference>
<dbReference type="NCBIfam" id="TIGR00043">
    <property type="entry name" value="rRNA maturation RNase YbeY"/>
    <property type="match status" value="1"/>
</dbReference>
<dbReference type="PANTHER" id="PTHR46986">
    <property type="entry name" value="ENDORIBONUCLEASE YBEY, CHLOROPLASTIC"/>
    <property type="match status" value="1"/>
</dbReference>
<dbReference type="PANTHER" id="PTHR46986:SF1">
    <property type="entry name" value="ENDORIBONUCLEASE YBEY, CHLOROPLASTIC"/>
    <property type="match status" value="1"/>
</dbReference>
<dbReference type="Pfam" id="PF02130">
    <property type="entry name" value="YbeY"/>
    <property type="match status" value="1"/>
</dbReference>
<dbReference type="SUPFAM" id="SSF55486">
    <property type="entry name" value="Metalloproteases ('zincins'), catalytic domain"/>
    <property type="match status" value="1"/>
</dbReference>
<feature type="chain" id="PRO_0000321771" description="Endoribonuclease YbeY">
    <location>
        <begin position="1"/>
        <end position="155"/>
    </location>
</feature>
<feature type="binding site" evidence="1">
    <location>
        <position position="120"/>
    </location>
    <ligand>
        <name>Zn(2+)</name>
        <dbReference type="ChEBI" id="CHEBI:29105"/>
        <note>catalytic</note>
    </ligand>
</feature>
<feature type="binding site" evidence="1">
    <location>
        <position position="124"/>
    </location>
    <ligand>
        <name>Zn(2+)</name>
        <dbReference type="ChEBI" id="CHEBI:29105"/>
        <note>catalytic</note>
    </ligand>
</feature>
<feature type="binding site" evidence="1">
    <location>
        <position position="130"/>
    </location>
    <ligand>
        <name>Zn(2+)</name>
        <dbReference type="ChEBI" id="CHEBI:29105"/>
        <note>catalytic</note>
    </ligand>
</feature>
<comment type="function">
    <text evidence="1">Single strand-specific metallo-endoribonuclease involved in late-stage 70S ribosome quality control and in maturation of the 3' terminus of the 16S rRNA.</text>
</comment>
<comment type="cofactor">
    <cofactor evidence="1">
        <name>Zn(2+)</name>
        <dbReference type="ChEBI" id="CHEBI:29105"/>
    </cofactor>
    <text evidence="1">Binds 1 zinc ion.</text>
</comment>
<comment type="subcellular location">
    <subcellularLocation>
        <location evidence="1">Cytoplasm</location>
    </subcellularLocation>
</comment>
<comment type="similarity">
    <text evidence="1">Belongs to the endoribonuclease YbeY family.</text>
</comment>
<evidence type="ECO:0000255" key="1">
    <source>
        <dbReference type="HAMAP-Rule" id="MF_00009"/>
    </source>
</evidence>
<gene>
    <name evidence="1" type="primary">ybeY</name>
    <name type="ordered locus">Amet_3031</name>
</gene>